<gene>
    <name evidence="1" type="primary">rpmG2</name>
    <name type="ordered locus">USA300HOU_1278</name>
</gene>
<sequence>MFNVRVNVTLACTECGDRNYITTKNKRNNPERIEMKKYCPRLNKYTLHRETK</sequence>
<keyword id="KW-0687">Ribonucleoprotein</keyword>
<keyword id="KW-0689">Ribosomal protein</keyword>
<organism>
    <name type="scientific">Staphylococcus aureus (strain USA300 / TCH1516)</name>
    <dbReference type="NCBI Taxonomy" id="451516"/>
    <lineage>
        <taxon>Bacteria</taxon>
        <taxon>Bacillati</taxon>
        <taxon>Bacillota</taxon>
        <taxon>Bacilli</taxon>
        <taxon>Bacillales</taxon>
        <taxon>Staphylococcaceae</taxon>
        <taxon>Staphylococcus</taxon>
    </lineage>
</organism>
<name>RL332_STAAT</name>
<dbReference type="EMBL" id="CP000730">
    <property type="protein sequence ID" value="ABX29291.1"/>
    <property type="molecule type" value="Genomic_DNA"/>
</dbReference>
<dbReference type="SMR" id="A8Z216"/>
<dbReference type="KEGG" id="sax:USA300HOU_1278"/>
<dbReference type="HOGENOM" id="CLU_190949_0_2_9"/>
<dbReference type="GO" id="GO:0005737">
    <property type="term" value="C:cytoplasm"/>
    <property type="evidence" value="ECO:0007669"/>
    <property type="project" value="UniProtKB-ARBA"/>
</dbReference>
<dbReference type="GO" id="GO:1990904">
    <property type="term" value="C:ribonucleoprotein complex"/>
    <property type="evidence" value="ECO:0007669"/>
    <property type="project" value="UniProtKB-KW"/>
</dbReference>
<dbReference type="GO" id="GO:0005840">
    <property type="term" value="C:ribosome"/>
    <property type="evidence" value="ECO:0007669"/>
    <property type="project" value="UniProtKB-KW"/>
</dbReference>
<dbReference type="GO" id="GO:0003735">
    <property type="term" value="F:structural constituent of ribosome"/>
    <property type="evidence" value="ECO:0007669"/>
    <property type="project" value="InterPro"/>
</dbReference>
<dbReference type="GO" id="GO:0006412">
    <property type="term" value="P:translation"/>
    <property type="evidence" value="ECO:0007669"/>
    <property type="project" value="UniProtKB-UniRule"/>
</dbReference>
<dbReference type="Gene3D" id="2.20.28.120">
    <property type="entry name" value="Ribosomal protein L33"/>
    <property type="match status" value="1"/>
</dbReference>
<dbReference type="HAMAP" id="MF_00294">
    <property type="entry name" value="Ribosomal_bL33"/>
    <property type="match status" value="1"/>
</dbReference>
<dbReference type="InterPro" id="IPR001705">
    <property type="entry name" value="Ribosomal_bL33"/>
</dbReference>
<dbReference type="InterPro" id="IPR018264">
    <property type="entry name" value="Ribosomal_bL33_CS"/>
</dbReference>
<dbReference type="InterPro" id="IPR038584">
    <property type="entry name" value="Ribosomal_bL33_sf"/>
</dbReference>
<dbReference type="InterPro" id="IPR011332">
    <property type="entry name" value="Ribosomal_zn-bd"/>
</dbReference>
<dbReference type="NCBIfam" id="NF001764">
    <property type="entry name" value="PRK00504.1"/>
    <property type="match status" value="1"/>
</dbReference>
<dbReference type="NCBIfam" id="NF001860">
    <property type="entry name" value="PRK00595.1"/>
    <property type="match status" value="1"/>
</dbReference>
<dbReference type="NCBIfam" id="TIGR01023">
    <property type="entry name" value="rpmG_bact"/>
    <property type="match status" value="1"/>
</dbReference>
<dbReference type="PANTHER" id="PTHR43168">
    <property type="entry name" value="50S RIBOSOMAL PROTEIN L33, CHLOROPLASTIC"/>
    <property type="match status" value="1"/>
</dbReference>
<dbReference type="PANTHER" id="PTHR43168:SF2">
    <property type="entry name" value="LARGE RIBOSOMAL SUBUNIT PROTEIN BL33C"/>
    <property type="match status" value="1"/>
</dbReference>
<dbReference type="Pfam" id="PF00471">
    <property type="entry name" value="Ribosomal_L33"/>
    <property type="match status" value="1"/>
</dbReference>
<dbReference type="SUPFAM" id="SSF57829">
    <property type="entry name" value="Zn-binding ribosomal proteins"/>
    <property type="match status" value="1"/>
</dbReference>
<dbReference type="PROSITE" id="PS00582">
    <property type="entry name" value="RIBOSOMAL_L33"/>
    <property type="match status" value="1"/>
</dbReference>
<comment type="similarity">
    <text evidence="1">Belongs to the bacterial ribosomal protein bL33 family.</text>
</comment>
<protein>
    <recommendedName>
        <fullName evidence="1">Large ribosomal subunit protein bL33B</fullName>
    </recommendedName>
    <alternativeName>
        <fullName evidence="1">50S ribosomal protein L33 2</fullName>
    </alternativeName>
</protein>
<reference key="1">
    <citation type="journal article" date="2007" name="BMC Microbiol.">
        <title>Subtle genetic changes enhance virulence of methicillin resistant and sensitive Staphylococcus aureus.</title>
        <authorList>
            <person name="Highlander S.K."/>
            <person name="Hulten K.G."/>
            <person name="Qin X."/>
            <person name="Jiang H."/>
            <person name="Yerrapragada S."/>
            <person name="Mason E.O. Jr."/>
            <person name="Shang Y."/>
            <person name="Williams T.M."/>
            <person name="Fortunov R.M."/>
            <person name="Liu Y."/>
            <person name="Igboeli O."/>
            <person name="Petrosino J."/>
            <person name="Tirumalai M."/>
            <person name="Uzman A."/>
            <person name="Fox G.E."/>
            <person name="Cardenas A.M."/>
            <person name="Muzny D.M."/>
            <person name="Hemphill L."/>
            <person name="Ding Y."/>
            <person name="Dugan S."/>
            <person name="Blyth P.R."/>
            <person name="Buhay C.J."/>
            <person name="Dinh H.H."/>
            <person name="Hawes A.C."/>
            <person name="Holder M."/>
            <person name="Kovar C.L."/>
            <person name="Lee S.L."/>
            <person name="Liu W."/>
            <person name="Nazareth L.V."/>
            <person name="Wang Q."/>
            <person name="Zhou J."/>
            <person name="Kaplan S.L."/>
            <person name="Weinstock G.M."/>
        </authorList>
    </citation>
    <scope>NUCLEOTIDE SEQUENCE [LARGE SCALE GENOMIC DNA]</scope>
    <source>
        <strain>USA300 / TCH1516</strain>
    </source>
</reference>
<proteinExistence type="inferred from homology"/>
<accession>A8Z216</accession>
<evidence type="ECO:0000255" key="1">
    <source>
        <dbReference type="HAMAP-Rule" id="MF_00294"/>
    </source>
</evidence>
<feature type="chain" id="PRO_0000356695" description="Large ribosomal subunit protein bL33B">
    <location>
        <begin position="1"/>
        <end position="52"/>
    </location>
</feature>